<keyword id="KW-0975">Bacterial flagellum</keyword>
<keyword id="KW-1185">Reference proteome</keyword>
<organism>
    <name type="scientific">Escherichia coli O139:H28 (strain E24377A / ETEC)</name>
    <dbReference type="NCBI Taxonomy" id="331111"/>
    <lineage>
        <taxon>Bacteria</taxon>
        <taxon>Pseudomonadati</taxon>
        <taxon>Pseudomonadota</taxon>
        <taxon>Gammaproteobacteria</taxon>
        <taxon>Enterobacterales</taxon>
        <taxon>Enterobacteriaceae</taxon>
        <taxon>Escherichia</taxon>
    </lineage>
</organism>
<comment type="subcellular location">
    <subcellularLocation>
        <location evidence="1">Bacterial flagellum basal body</location>
    </subcellularLocation>
</comment>
<comment type="similarity">
    <text evidence="1">Belongs to the FliE family.</text>
</comment>
<reference key="1">
    <citation type="journal article" date="2008" name="J. Bacteriol.">
        <title>The pangenome structure of Escherichia coli: comparative genomic analysis of E. coli commensal and pathogenic isolates.</title>
        <authorList>
            <person name="Rasko D.A."/>
            <person name="Rosovitz M.J."/>
            <person name="Myers G.S.A."/>
            <person name="Mongodin E.F."/>
            <person name="Fricke W.F."/>
            <person name="Gajer P."/>
            <person name="Crabtree J."/>
            <person name="Sebaihia M."/>
            <person name="Thomson N.R."/>
            <person name="Chaudhuri R."/>
            <person name="Henderson I.R."/>
            <person name="Sperandio V."/>
            <person name="Ravel J."/>
        </authorList>
    </citation>
    <scope>NUCLEOTIDE SEQUENCE [LARGE SCALE GENOMIC DNA]</scope>
    <source>
        <strain>E24377A / ETEC</strain>
    </source>
</reference>
<dbReference type="EMBL" id="CP000800">
    <property type="protein sequence ID" value="ABV20959.1"/>
    <property type="molecule type" value="Genomic_DNA"/>
</dbReference>
<dbReference type="RefSeq" id="WP_001274292.1">
    <property type="nucleotide sequence ID" value="NC_009801.1"/>
</dbReference>
<dbReference type="SMR" id="A7ZN60"/>
<dbReference type="KEGG" id="ecw:EcE24377A_2170"/>
<dbReference type="HOGENOM" id="CLU_147249_0_2_6"/>
<dbReference type="Proteomes" id="UP000001122">
    <property type="component" value="Chromosome"/>
</dbReference>
<dbReference type="GO" id="GO:0009425">
    <property type="term" value="C:bacterial-type flagellum basal body"/>
    <property type="evidence" value="ECO:0007669"/>
    <property type="project" value="UniProtKB-SubCell"/>
</dbReference>
<dbReference type="GO" id="GO:0003774">
    <property type="term" value="F:cytoskeletal motor activity"/>
    <property type="evidence" value="ECO:0007669"/>
    <property type="project" value="InterPro"/>
</dbReference>
<dbReference type="GO" id="GO:0005198">
    <property type="term" value="F:structural molecule activity"/>
    <property type="evidence" value="ECO:0007669"/>
    <property type="project" value="InterPro"/>
</dbReference>
<dbReference type="GO" id="GO:0071973">
    <property type="term" value="P:bacterial-type flagellum-dependent cell motility"/>
    <property type="evidence" value="ECO:0007669"/>
    <property type="project" value="InterPro"/>
</dbReference>
<dbReference type="HAMAP" id="MF_00724">
    <property type="entry name" value="FliE"/>
    <property type="match status" value="1"/>
</dbReference>
<dbReference type="InterPro" id="IPR001624">
    <property type="entry name" value="FliE"/>
</dbReference>
<dbReference type="NCBIfam" id="TIGR00205">
    <property type="entry name" value="fliE"/>
    <property type="match status" value="1"/>
</dbReference>
<dbReference type="PANTHER" id="PTHR34653">
    <property type="match status" value="1"/>
</dbReference>
<dbReference type="PANTHER" id="PTHR34653:SF1">
    <property type="entry name" value="FLAGELLAR HOOK-BASAL BODY COMPLEX PROTEIN FLIE"/>
    <property type="match status" value="1"/>
</dbReference>
<dbReference type="Pfam" id="PF02049">
    <property type="entry name" value="FliE"/>
    <property type="match status" value="1"/>
</dbReference>
<dbReference type="PRINTS" id="PR01006">
    <property type="entry name" value="FLGHOOKFLIE"/>
</dbReference>
<feature type="chain" id="PRO_1000062093" description="Flagellar hook-basal body complex protein FliE">
    <location>
        <begin position="1"/>
        <end position="104"/>
    </location>
</feature>
<proteinExistence type="inferred from homology"/>
<name>FLIE_ECO24</name>
<evidence type="ECO:0000255" key="1">
    <source>
        <dbReference type="HAMAP-Rule" id="MF_00724"/>
    </source>
</evidence>
<gene>
    <name evidence="1" type="primary">fliE</name>
    <name type="ordered locus">EcE24377A_2170</name>
</gene>
<accession>A7ZN60</accession>
<protein>
    <recommendedName>
        <fullName evidence="1">Flagellar hook-basal body complex protein FliE</fullName>
    </recommendedName>
</protein>
<sequence>MSAIQGIEGVISLLQATAMSARAQDSLPQPTISFAGQLHAALDRISDTQTAARTQAEKFTLGEPGVALNDVMTDMQKASVSMQMGIQVRNKLVAAYQEVMSMQV</sequence>